<gene>
    <name evidence="1" type="primary">rpsB</name>
    <name type="ordered locus">Sbal_1450</name>
</gene>
<accession>A3D2K5</accession>
<evidence type="ECO:0000255" key="1">
    <source>
        <dbReference type="HAMAP-Rule" id="MF_00291"/>
    </source>
</evidence>
<evidence type="ECO:0000305" key="2"/>
<dbReference type="EMBL" id="CP000563">
    <property type="protein sequence ID" value="ABN60968.1"/>
    <property type="molecule type" value="Genomic_DNA"/>
</dbReference>
<dbReference type="RefSeq" id="WP_006080979.1">
    <property type="nucleotide sequence ID" value="NC_009052.1"/>
</dbReference>
<dbReference type="SMR" id="A3D2K5"/>
<dbReference type="STRING" id="325240.Sbal_1450"/>
<dbReference type="GeneID" id="11771730"/>
<dbReference type="KEGG" id="sbl:Sbal_1450"/>
<dbReference type="HOGENOM" id="CLU_040318_1_2_6"/>
<dbReference type="OrthoDB" id="9808036at2"/>
<dbReference type="Proteomes" id="UP000001557">
    <property type="component" value="Chromosome"/>
</dbReference>
<dbReference type="GO" id="GO:0022627">
    <property type="term" value="C:cytosolic small ribosomal subunit"/>
    <property type="evidence" value="ECO:0007669"/>
    <property type="project" value="TreeGrafter"/>
</dbReference>
<dbReference type="GO" id="GO:0003735">
    <property type="term" value="F:structural constituent of ribosome"/>
    <property type="evidence" value="ECO:0007669"/>
    <property type="project" value="InterPro"/>
</dbReference>
<dbReference type="GO" id="GO:0006412">
    <property type="term" value="P:translation"/>
    <property type="evidence" value="ECO:0007669"/>
    <property type="project" value="UniProtKB-UniRule"/>
</dbReference>
<dbReference type="CDD" id="cd01425">
    <property type="entry name" value="RPS2"/>
    <property type="match status" value="1"/>
</dbReference>
<dbReference type="FunFam" id="1.10.287.610:FF:000001">
    <property type="entry name" value="30S ribosomal protein S2"/>
    <property type="match status" value="1"/>
</dbReference>
<dbReference type="Gene3D" id="3.40.50.10490">
    <property type="entry name" value="Glucose-6-phosphate isomerase like protein, domain 1"/>
    <property type="match status" value="1"/>
</dbReference>
<dbReference type="Gene3D" id="1.10.287.610">
    <property type="entry name" value="Helix hairpin bin"/>
    <property type="match status" value="1"/>
</dbReference>
<dbReference type="HAMAP" id="MF_00291_B">
    <property type="entry name" value="Ribosomal_uS2_B"/>
    <property type="match status" value="1"/>
</dbReference>
<dbReference type="InterPro" id="IPR001865">
    <property type="entry name" value="Ribosomal_uS2"/>
</dbReference>
<dbReference type="InterPro" id="IPR005706">
    <property type="entry name" value="Ribosomal_uS2_bac/mit/plastid"/>
</dbReference>
<dbReference type="InterPro" id="IPR018130">
    <property type="entry name" value="Ribosomal_uS2_CS"/>
</dbReference>
<dbReference type="InterPro" id="IPR023591">
    <property type="entry name" value="Ribosomal_uS2_flav_dom_sf"/>
</dbReference>
<dbReference type="NCBIfam" id="TIGR01011">
    <property type="entry name" value="rpsB_bact"/>
    <property type="match status" value="1"/>
</dbReference>
<dbReference type="PANTHER" id="PTHR12534">
    <property type="entry name" value="30S RIBOSOMAL PROTEIN S2 PROKARYOTIC AND ORGANELLAR"/>
    <property type="match status" value="1"/>
</dbReference>
<dbReference type="PANTHER" id="PTHR12534:SF0">
    <property type="entry name" value="SMALL RIBOSOMAL SUBUNIT PROTEIN US2M"/>
    <property type="match status" value="1"/>
</dbReference>
<dbReference type="Pfam" id="PF00318">
    <property type="entry name" value="Ribosomal_S2"/>
    <property type="match status" value="1"/>
</dbReference>
<dbReference type="PRINTS" id="PR00395">
    <property type="entry name" value="RIBOSOMALS2"/>
</dbReference>
<dbReference type="SUPFAM" id="SSF52313">
    <property type="entry name" value="Ribosomal protein S2"/>
    <property type="match status" value="1"/>
</dbReference>
<dbReference type="PROSITE" id="PS00962">
    <property type="entry name" value="RIBOSOMAL_S2_1"/>
    <property type="match status" value="1"/>
</dbReference>
<dbReference type="PROSITE" id="PS00963">
    <property type="entry name" value="RIBOSOMAL_S2_2"/>
    <property type="match status" value="1"/>
</dbReference>
<protein>
    <recommendedName>
        <fullName evidence="1">Small ribosomal subunit protein uS2</fullName>
    </recommendedName>
    <alternativeName>
        <fullName evidence="2">30S ribosomal protein S2</fullName>
    </alternativeName>
</protein>
<feature type="chain" id="PRO_1000004061" description="Small ribosomal subunit protein uS2">
    <location>
        <begin position="1"/>
        <end position="242"/>
    </location>
</feature>
<proteinExistence type="inferred from homology"/>
<organism>
    <name type="scientific">Shewanella baltica (strain OS155 / ATCC BAA-1091)</name>
    <dbReference type="NCBI Taxonomy" id="325240"/>
    <lineage>
        <taxon>Bacteria</taxon>
        <taxon>Pseudomonadati</taxon>
        <taxon>Pseudomonadota</taxon>
        <taxon>Gammaproteobacteria</taxon>
        <taxon>Alteromonadales</taxon>
        <taxon>Shewanellaceae</taxon>
        <taxon>Shewanella</taxon>
    </lineage>
</organism>
<reference key="1">
    <citation type="submission" date="2007-02" db="EMBL/GenBank/DDBJ databases">
        <title>Complete sequence of chromosome of Shewanella baltica OS155.</title>
        <authorList>
            <consortium name="US DOE Joint Genome Institute"/>
            <person name="Copeland A."/>
            <person name="Lucas S."/>
            <person name="Lapidus A."/>
            <person name="Barry K."/>
            <person name="Detter J.C."/>
            <person name="Glavina del Rio T."/>
            <person name="Hammon N."/>
            <person name="Israni S."/>
            <person name="Dalin E."/>
            <person name="Tice H."/>
            <person name="Pitluck S."/>
            <person name="Sims D.R."/>
            <person name="Brettin T."/>
            <person name="Bruce D."/>
            <person name="Han C."/>
            <person name="Tapia R."/>
            <person name="Brainard J."/>
            <person name="Schmutz J."/>
            <person name="Larimer F."/>
            <person name="Land M."/>
            <person name="Hauser L."/>
            <person name="Kyrpides N."/>
            <person name="Mikhailova N."/>
            <person name="Brettar I."/>
            <person name="Klappenbach J."/>
            <person name="Konstantinidis K."/>
            <person name="Rodrigues J."/>
            <person name="Tiedje J."/>
            <person name="Richardson P."/>
        </authorList>
    </citation>
    <scope>NUCLEOTIDE SEQUENCE [LARGE SCALE GENOMIC DNA]</scope>
    <source>
        <strain>OS155 / ATCC BAA-1091</strain>
    </source>
</reference>
<sequence length="242" mass="26570">MTTVSMRDMLQAGVHFGHQTRYWNPKMKPFIFGARNGVHIINLEHTVPMFNEALAFISNVASKKGKVLFVGTKRAAGEAIKESALSCDQFYVDHRWLGGMLTNWKTVRQSIKRLKELESQSVDGTFDKLTKKEALMRTRELEKLEKSLGGIKNMGGLPDVLFVIGADHEHIAIKEANNLGIPVVAVVDTNSAPDGVNYIVPGNDDAMRAIRLYTSSVAAAAKAGRGQDLAVQAEQDGFVEAE</sequence>
<name>RS2_SHEB5</name>
<comment type="similarity">
    <text evidence="1">Belongs to the universal ribosomal protein uS2 family.</text>
</comment>
<keyword id="KW-1185">Reference proteome</keyword>
<keyword id="KW-0687">Ribonucleoprotein</keyword>
<keyword id="KW-0689">Ribosomal protein</keyword>